<sequence length="92" mass="10342">MSADSAWYLYLLECTGDSIYTGITTDVARRFAEHLSGKGAKYTRSRKPIRVLGQLRFDTKSEALKAEIEIKRLSSTQKRAFCAQLPATEPAR</sequence>
<accession>Q0K4W7</accession>
<evidence type="ECO:0000255" key="1">
    <source>
        <dbReference type="PROSITE-ProRule" id="PRU00977"/>
    </source>
</evidence>
<evidence type="ECO:0000305" key="2"/>
<organism>
    <name type="scientific">Cupriavidus necator (strain ATCC 17699 / DSM 428 / KCTC 22496 / NCIMB 10442 / H16 / Stanier 337)</name>
    <name type="common">Ralstonia eutropha</name>
    <dbReference type="NCBI Taxonomy" id="381666"/>
    <lineage>
        <taxon>Bacteria</taxon>
        <taxon>Pseudomonadati</taxon>
        <taxon>Pseudomonadota</taxon>
        <taxon>Betaproteobacteria</taxon>
        <taxon>Burkholderiales</taxon>
        <taxon>Burkholderiaceae</taxon>
        <taxon>Cupriavidus</taxon>
    </lineage>
</organism>
<keyword id="KW-1185">Reference proteome</keyword>
<proteinExistence type="inferred from homology"/>
<reference key="1">
    <citation type="journal article" date="2006" name="Nat. Biotechnol.">
        <title>Genome sequence of the bioplastic-producing 'Knallgas' bacterium Ralstonia eutropha H16.</title>
        <authorList>
            <person name="Pohlmann A."/>
            <person name="Fricke W.F."/>
            <person name="Reinecke F."/>
            <person name="Kusian B."/>
            <person name="Liesegang H."/>
            <person name="Cramm R."/>
            <person name="Eitinger T."/>
            <person name="Ewering C."/>
            <person name="Poetter M."/>
            <person name="Schwartz E."/>
            <person name="Strittmatter A."/>
            <person name="Voss I."/>
            <person name="Gottschalk G."/>
            <person name="Steinbuechel A."/>
            <person name="Friedrich B."/>
            <person name="Bowien B."/>
        </authorList>
    </citation>
    <scope>NUCLEOTIDE SEQUENCE [LARGE SCALE GENOMIC DNA]</scope>
    <source>
        <strain>ATCC 17699 / DSM 428 / KCTC 22496 / NCIMB 10442 / H16 / Stanier 337</strain>
    </source>
</reference>
<name>Y4156_CUPNH</name>
<feature type="chain" id="PRO_1000063680" description="UPF0213 protein H16_B0156">
    <location>
        <begin position="1"/>
        <end position="92"/>
    </location>
</feature>
<feature type="domain" description="GIY-YIG" evidence="1">
    <location>
        <begin position="5"/>
        <end position="80"/>
    </location>
</feature>
<protein>
    <recommendedName>
        <fullName>UPF0213 protein H16_B0156</fullName>
    </recommendedName>
</protein>
<gene>
    <name type="ordered locus">H16_B0156</name>
</gene>
<dbReference type="EMBL" id="AM260480">
    <property type="protein sequence ID" value="CAJ94957.1"/>
    <property type="molecule type" value="Genomic_DNA"/>
</dbReference>
<dbReference type="RefSeq" id="WP_010809788.1">
    <property type="nucleotide sequence ID" value="NZ_CP039288.1"/>
</dbReference>
<dbReference type="SMR" id="Q0K4W7"/>
<dbReference type="STRING" id="381666.H16_B0156"/>
<dbReference type="KEGG" id="reh:H16_B0156"/>
<dbReference type="eggNOG" id="COG2827">
    <property type="taxonomic scope" value="Bacteria"/>
</dbReference>
<dbReference type="HOGENOM" id="CLU_135650_0_3_4"/>
<dbReference type="OrthoDB" id="9797095at2"/>
<dbReference type="Proteomes" id="UP000008210">
    <property type="component" value="Chromosome 2"/>
</dbReference>
<dbReference type="CDD" id="cd10456">
    <property type="entry name" value="GIY-YIG_UPF0213"/>
    <property type="match status" value="1"/>
</dbReference>
<dbReference type="Gene3D" id="3.40.1440.10">
    <property type="entry name" value="GIY-YIG endonuclease"/>
    <property type="match status" value="1"/>
</dbReference>
<dbReference type="InterPro" id="IPR000305">
    <property type="entry name" value="GIY-YIG_endonuc"/>
</dbReference>
<dbReference type="InterPro" id="IPR035901">
    <property type="entry name" value="GIY-YIG_endonuc_sf"/>
</dbReference>
<dbReference type="InterPro" id="IPR050190">
    <property type="entry name" value="UPF0213_domain"/>
</dbReference>
<dbReference type="PANTHER" id="PTHR34477">
    <property type="entry name" value="UPF0213 PROTEIN YHBQ"/>
    <property type="match status" value="1"/>
</dbReference>
<dbReference type="PANTHER" id="PTHR34477:SF1">
    <property type="entry name" value="UPF0213 PROTEIN YHBQ"/>
    <property type="match status" value="1"/>
</dbReference>
<dbReference type="Pfam" id="PF01541">
    <property type="entry name" value="GIY-YIG"/>
    <property type="match status" value="1"/>
</dbReference>
<dbReference type="SUPFAM" id="SSF82771">
    <property type="entry name" value="GIY-YIG endonuclease"/>
    <property type="match status" value="1"/>
</dbReference>
<dbReference type="PROSITE" id="PS50164">
    <property type="entry name" value="GIY_YIG"/>
    <property type="match status" value="1"/>
</dbReference>
<comment type="similarity">
    <text evidence="2">Belongs to the UPF0213 family.</text>
</comment>